<organism>
    <name type="scientific">Mycolicibacterium smegmatis (strain ATCC 700084 / mc(2)155)</name>
    <name type="common">Mycobacterium smegmatis</name>
    <dbReference type="NCBI Taxonomy" id="246196"/>
    <lineage>
        <taxon>Bacteria</taxon>
        <taxon>Bacillati</taxon>
        <taxon>Actinomycetota</taxon>
        <taxon>Actinomycetes</taxon>
        <taxon>Mycobacteriales</taxon>
        <taxon>Mycobacteriaceae</taxon>
        <taxon>Mycolicibacterium</taxon>
    </lineage>
</organism>
<reference key="1">
    <citation type="submission" date="2006-10" db="EMBL/GenBank/DDBJ databases">
        <authorList>
            <person name="Fleischmann R.D."/>
            <person name="Dodson R.J."/>
            <person name="Haft D.H."/>
            <person name="Merkel J.S."/>
            <person name="Nelson W.C."/>
            <person name="Fraser C.M."/>
        </authorList>
    </citation>
    <scope>NUCLEOTIDE SEQUENCE [LARGE SCALE GENOMIC DNA]</scope>
    <source>
        <strain>ATCC 700084 / mc(2)155</strain>
    </source>
</reference>
<reference key="2">
    <citation type="journal article" date="2007" name="Genome Biol.">
        <title>Interrupted coding sequences in Mycobacterium smegmatis: authentic mutations or sequencing errors?</title>
        <authorList>
            <person name="Deshayes C."/>
            <person name="Perrodou E."/>
            <person name="Gallien S."/>
            <person name="Euphrasie D."/>
            <person name="Schaeffer C."/>
            <person name="Van-Dorsselaer A."/>
            <person name="Poch O."/>
            <person name="Lecompte O."/>
            <person name="Reyrat J.-M."/>
        </authorList>
    </citation>
    <scope>NUCLEOTIDE SEQUENCE [LARGE SCALE GENOMIC DNA]</scope>
    <source>
        <strain>ATCC 700084 / mc(2)155</strain>
    </source>
</reference>
<reference key="3">
    <citation type="journal article" date="2009" name="Genome Res.">
        <title>Ortho-proteogenomics: multiple proteomes investigation through orthology and a new MS-based protocol.</title>
        <authorList>
            <person name="Gallien S."/>
            <person name="Perrodou E."/>
            <person name="Carapito C."/>
            <person name="Deshayes C."/>
            <person name="Reyrat J.-M."/>
            <person name="Van Dorsselaer A."/>
            <person name="Poch O."/>
            <person name="Schaeffer C."/>
            <person name="Lecompte O."/>
        </authorList>
    </citation>
    <scope>NUCLEOTIDE SEQUENCE [LARGE SCALE GENOMIC DNA]</scope>
    <source>
        <strain>ATCC 700084 / mc(2)155</strain>
    </source>
</reference>
<proteinExistence type="inferred from homology"/>
<comment type="function">
    <text evidence="1">Involved in DNA repair and RecF pathway recombination.</text>
</comment>
<comment type="similarity">
    <text evidence="1">Belongs to the RecO family.</text>
</comment>
<feature type="chain" id="PRO_1000012140" description="DNA repair protein RecO">
    <location>
        <begin position="1"/>
        <end position="280"/>
    </location>
</feature>
<feature type="region of interest" description="Disordered" evidence="2">
    <location>
        <begin position="261"/>
        <end position="280"/>
    </location>
</feature>
<name>RECO_MYCS2</name>
<keyword id="KW-0227">DNA damage</keyword>
<keyword id="KW-0233">DNA recombination</keyword>
<keyword id="KW-0234">DNA repair</keyword>
<keyword id="KW-1185">Reference proteome</keyword>
<dbReference type="EMBL" id="CP000480">
    <property type="protein sequence ID" value="ABK69764.1"/>
    <property type="molecule type" value="Genomic_DNA"/>
</dbReference>
<dbReference type="EMBL" id="CP001663">
    <property type="protein sequence ID" value="AFP40834.1"/>
    <property type="molecule type" value="Genomic_DNA"/>
</dbReference>
<dbReference type="RefSeq" id="WP_003895862.1">
    <property type="nucleotide sequence ID" value="NZ_SIJM01000026.1"/>
</dbReference>
<dbReference type="RefSeq" id="YP_888763.1">
    <property type="nucleotide sequence ID" value="NC_008596.1"/>
</dbReference>
<dbReference type="SMR" id="A0R0S5"/>
<dbReference type="STRING" id="246196.MSMEG_4491"/>
<dbReference type="PaxDb" id="246196-MSMEI_4380"/>
<dbReference type="GeneID" id="93459194"/>
<dbReference type="KEGG" id="msb:LJ00_22220"/>
<dbReference type="KEGG" id="msg:MSMEI_4380"/>
<dbReference type="KEGG" id="msm:MSMEG_4491"/>
<dbReference type="PATRIC" id="fig|246196.19.peg.4397"/>
<dbReference type="eggNOG" id="COG1381">
    <property type="taxonomic scope" value="Bacteria"/>
</dbReference>
<dbReference type="OrthoDB" id="9812244at2"/>
<dbReference type="Proteomes" id="UP000000757">
    <property type="component" value="Chromosome"/>
</dbReference>
<dbReference type="Proteomes" id="UP000006158">
    <property type="component" value="Chromosome"/>
</dbReference>
<dbReference type="GO" id="GO:0043590">
    <property type="term" value="C:bacterial nucleoid"/>
    <property type="evidence" value="ECO:0007669"/>
    <property type="project" value="TreeGrafter"/>
</dbReference>
<dbReference type="GO" id="GO:0006310">
    <property type="term" value="P:DNA recombination"/>
    <property type="evidence" value="ECO:0007669"/>
    <property type="project" value="UniProtKB-UniRule"/>
</dbReference>
<dbReference type="GO" id="GO:0006302">
    <property type="term" value="P:double-strand break repair"/>
    <property type="evidence" value="ECO:0007669"/>
    <property type="project" value="TreeGrafter"/>
</dbReference>
<dbReference type="FunFam" id="2.40.50.140:FF:000176">
    <property type="entry name" value="DNA repair protein RecO"/>
    <property type="match status" value="1"/>
</dbReference>
<dbReference type="Gene3D" id="2.40.50.140">
    <property type="entry name" value="Nucleic acid-binding proteins"/>
    <property type="match status" value="1"/>
</dbReference>
<dbReference type="Gene3D" id="1.20.1440.120">
    <property type="entry name" value="Recombination protein O, C-terminal domain"/>
    <property type="match status" value="1"/>
</dbReference>
<dbReference type="HAMAP" id="MF_00201">
    <property type="entry name" value="RecO"/>
    <property type="match status" value="1"/>
</dbReference>
<dbReference type="InterPro" id="IPR037278">
    <property type="entry name" value="ARFGAP/RecO"/>
</dbReference>
<dbReference type="InterPro" id="IPR022572">
    <property type="entry name" value="DNA_rep/recomb_RecO_N"/>
</dbReference>
<dbReference type="InterPro" id="IPR012340">
    <property type="entry name" value="NA-bd_OB-fold"/>
</dbReference>
<dbReference type="InterPro" id="IPR003717">
    <property type="entry name" value="RecO"/>
</dbReference>
<dbReference type="InterPro" id="IPR042242">
    <property type="entry name" value="RecO_C"/>
</dbReference>
<dbReference type="NCBIfam" id="TIGR00613">
    <property type="entry name" value="reco"/>
    <property type="match status" value="1"/>
</dbReference>
<dbReference type="PANTHER" id="PTHR33991">
    <property type="entry name" value="DNA REPAIR PROTEIN RECO"/>
    <property type="match status" value="1"/>
</dbReference>
<dbReference type="PANTHER" id="PTHR33991:SF1">
    <property type="entry name" value="DNA REPAIR PROTEIN RECO"/>
    <property type="match status" value="1"/>
</dbReference>
<dbReference type="Pfam" id="PF02565">
    <property type="entry name" value="RecO_C"/>
    <property type="match status" value="1"/>
</dbReference>
<dbReference type="Pfam" id="PF11967">
    <property type="entry name" value="RecO_N"/>
    <property type="match status" value="1"/>
</dbReference>
<dbReference type="SUPFAM" id="SSF57863">
    <property type="entry name" value="ArfGap/RecO-like zinc finger"/>
    <property type="match status" value="1"/>
</dbReference>
<dbReference type="SUPFAM" id="SSF50249">
    <property type="entry name" value="Nucleic acid-binding proteins"/>
    <property type="match status" value="1"/>
</dbReference>
<gene>
    <name evidence="1" type="primary">recO</name>
    <name type="ordered locus">MSMEG_4491</name>
    <name type="ordered locus">MSMEI_4380</name>
</gene>
<protein>
    <recommendedName>
        <fullName evidence="1">DNA repair protein RecO</fullName>
    </recommendedName>
    <alternativeName>
        <fullName evidence="1">Recombination protein O</fullName>
    </alternativeName>
</protein>
<evidence type="ECO:0000255" key="1">
    <source>
        <dbReference type="HAMAP-Rule" id="MF_00201"/>
    </source>
</evidence>
<evidence type="ECO:0000256" key="2">
    <source>
        <dbReference type="SAM" id="MobiDB-lite"/>
    </source>
</evidence>
<accession>A0R0S5</accession>
<accession>I7GDK1</accession>
<sequence length="280" mass="30668">MRLYRDRAVVLRQHKLGEADRIVTLLTRDHGLVRAVAKGVRRTRSKFGARLEPFAHIDVQLHPGRNLDIVTQVQAIDAFAADIVSDYGRYTTACAMLETAERLAGEERAPMPDLHRLTVAALRAIADGRRARELVLDSYLLRAMAIAGWAPALTECARCAAPGPHRAFHVAAGGSVCVHCRPSGSSTPPQAVLELMSALHDGDWEYAESSTPPHRSQASGLIAAHLQWHLERQLRTLPLVERGYRVDRTVAEQRAALVRQDMAHGNHTGQEDLPATASGA</sequence>